<comment type="function">
    <text evidence="1">Involved in the cleavage of the C1-C2 bond of 3D-(3,5/4)-trihydroxycyclohexane-1,2-dione (THcHDO) to yield 5-deoxy-glucuronate (5DG).</text>
</comment>
<comment type="catalytic activity">
    <reaction evidence="1">
        <text>3D-3,5/4-trihydroxycyclohexane-1,2-dione + H2O = 5-deoxy-D-glucuronate + H(+)</text>
        <dbReference type="Rhea" id="RHEA:25836"/>
        <dbReference type="ChEBI" id="CHEBI:15377"/>
        <dbReference type="ChEBI" id="CHEBI:15378"/>
        <dbReference type="ChEBI" id="CHEBI:28446"/>
        <dbReference type="ChEBI" id="CHEBI:58852"/>
        <dbReference type="EC" id="3.7.1.22"/>
    </reaction>
</comment>
<comment type="cofactor">
    <cofactor evidence="1">
        <name>Mg(2+)</name>
        <dbReference type="ChEBI" id="CHEBI:18420"/>
    </cofactor>
    <text evidence="1">Binds 1 Mg(2+) ion per subunit.</text>
</comment>
<comment type="cofactor">
    <cofactor evidence="1">
        <name>thiamine diphosphate</name>
        <dbReference type="ChEBI" id="CHEBI:58937"/>
    </cofactor>
    <text evidence="1">Binds 1 thiamine pyrophosphate per subunit.</text>
</comment>
<comment type="pathway">
    <text evidence="1">Polyol metabolism; myo-inositol degradation into acetyl-CoA; acetyl-CoA from myo-inositol: step 3/7.</text>
</comment>
<comment type="similarity">
    <text evidence="1">Belongs to the TPP enzyme family.</text>
</comment>
<gene>
    <name evidence="1" type="primary">iolD</name>
    <name type="ordered locus">CLH_1255</name>
</gene>
<evidence type="ECO:0000255" key="1">
    <source>
        <dbReference type="HAMAP-Rule" id="MF_01669"/>
    </source>
</evidence>
<proteinExistence type="inferred from homology"/>
<organism>
    <name type="scientific">Clostridium botulinum (strain Alaska E43 / Type E3)</name>
    <dbReference type="NCBI Taxonomy" id="508767"/>
    <lineage>
        <taxon>Bacteria</taxon>
        <taxon>Bacillati</taxon>
        <taxon>Bacillota</taxon>
        <taxon>Clostridia</taxon>
        <taxon>Eubacteriales</taxon>
        <taxon>Clostridiaceae</taxon>
        <taxon>Clostridium</taxon>
    </lineage>
</organism>
<protein>
    <recommendedName>
        <fullName evidence="1">3D-(3,5/4)-trihydroxycyclohexane-1,2-dione hydrolase</fullName>
        <shortName evidence="1">THcHDO hydrolase</shortName>
        <ecNumber evidence="1">3.7.1.22</ecNumber>
    </recommendedName>
</protein>
<sequence>MKSTKMTTAQALVRFLDNQYVSFDGKEEKFVHGIFTIFGHGIVVGLGQALDENTRDLKVYQGRNEQGMAHAATAFAKQNNRRKIIACSSSIGPGAANMVTAAATATVNNIPLLLLPGDSFATRQPDPVLQQIEQSYNLGITTNDVFKPVCKYWDRVNRPEQLMSAMINAMRVLTDPAETGAVCISLPQDVQGESFEFPEYFFKKRVHKITRPLAVEEEFYECLNIIKNKKKPIIICGGGVRYSEAGDALSKFANKFNIPIGETQAGKSSIKSSDPMNLGGIGVTGNLASNIIAKDADLVIGVGTRFSDFTTASKSLFKNPDVEFVTINLSKFHASKLDSCKMVGDAKECLEYLHKLLEKENYISSYKDEIKDAKIAWKEEMKRLTNIKYEENFEPIIKFRNKESLEEFKKLTDTTITQTSALGLIRECIDDDSIIVGASGSLPGDLQRMWETESLNSYHMEYGYSCMGYEIAAGFGAKLADPEKEVYSILGDGSYLMLHSELITSIQENKKVNVLLFDNCGFGCINNLQMSNGIGNLATEFRYRNSETNKLNGKLIPIDFAKAAEGYGLKTYTAKNLEELKNALIDAKKQKVSTLIDIKVLPKTMTDGYESWWHVGLAEVSEKESVNEAFKNSKKILKGARKY</sequence>
<feature type="chain" id="PRO_0000352537" description="3D-(3,5/4)-trihydroxycyclohexane-1,2-dione hydrolase">
    <location>
        <begin position="1"/>
        <end position="643"/>
    </location>
</feature>
<feature type="region of interest" description="Thiamine pyrophosphate binding" evidence="1">
    <location>
        <begin position="441"/>
        <end position="521"/>
    </location>
</feature>
<feature type="binding site" evidence="1">
    <location>
        <position position="65"/>
    </location>
    <ligand>
        <name>thiamine diphosphate</name>
        <dbReference type="ChEBI" id="CHEBI:58937"/>
    </ligand>
</feature>
<feature type="binding site" evidence="1">
    <location>
        <position position="492"/>
    </location>
    <ligand>
        <name>Mg(2+)</name>
        <dbReference type="ChEBI" id="CHEBI:18420"/>
    </ligand>
</feature>
<feature type="binding site" evidence="1">
    <location>
        <position position="519"/>
    </location>
    <ligand>
        <name>Mg(2+)</name>
        <dbReference type="ChEBI" id="CHEBI:18420"/>
    </ligand>
</feature>
<reference key="1">
    <citation type="submission" date="2008-05" db="EMBL/GenBank/DDBJ databases">
        <title>Complete genome sequence of Clostridium botulinum E3 str. Alaska E43.</title>
        <authorList>
            <person name="Brinkac L.M."/>
            <person name="Brown J.L."/>
            <person name="Bruce D."/>
            <person name="Detter C."/>
            <person name="Munk C."/>
            <person name="Smith L.A."/>
            <person name="Smith T.J."/>
            <person name="Sutton G."/>
            <person name="Brettin T.S."/>
        </authorList>
    </citation>
    <scope>NUCLEOTIDE SEQUENCE [LARGE SCALE GENOMIC DNA]</scope>
    <source>
        <strain>Alaska E43 / Type E3</strain>
    </source>
</reference>
<name>IOLD_CLOBA</name>
<keyword id="KW-0378">Hydrolase</keyword>
<keyword id="KW-0460">Magnesium</keyword>
<keyword id="KW-0479">Metal-binding</keyword>
<keyword id="KW-0520">NAD</keyword>
<keyword id="KW-0786">Thiamine pyrophosphate</keyword>
<accession>B2V4K0</accession>
<dbReference type="EC" id="3.7.1.22" evidence="1"/>
<dbReference type="EMBL" id="CP001078">
    <property type="protein sequence ID" value="ACD52572.1"/>
    <property type="molecule type" value="Genomic_DNA"/>
</dbReference>
<dbReference type="RefSeq" id="WP_012450689.1">
    <property type="nucleotide sequence ID" value="NC_010723.1"/>
</dbReference>
<dbReference type="SMR" id="B2V4K0"/>
<dbReference type="KEGG" id="cbt:CLH_1255"/>
<dbReference type="HOGENOM" id="CLU_013748_6_0_9"/>
<dbReference type="UniPathway" id="UPA00076">
    <property type="reaction ID" value="UER00145"/>
</dbReference>
<dbReference type="GO" id="GO:0005948">
    <property type="term" value="C:acetolactate synthase complex"/>
    <property type="evidence" value="ECO:0007669"/>
    <property type="project" value="TreeGrafter"/>
</dbReference>
<dbReference type="GO" id="GO:0102481">
    <property type="term" value="F:3D-(3,5/4)-trihydroxycyclohexane-1,2-dione hydrolase activity"/>
    <property type="evidence" value="ECO:0007669"/>
    <property type="project" value="UniProtKB-EC"/>
</dbReference>
<dbReference type="GO" id="GO:0003984">
    <property type="term" value="F:acetolactate synthase activity"/>
    <property type="evidence" value="ECO:0007669"/>
    <property type="project" value="TreeGrafter"/>
</dbReference>
<dbReference type="GO" id="GO:0050660">
    <property type="term" value="F:flavin adenine dinucleotide binding"/>
    <property type="evidence" value="ECO:0007669"/>
    <property type="project" value="TreeGrafter"/>
</dbReference>
<dbReference type="GO" id="GO:0000287">
    <property type="term" value="F:magnesium ion binding"/>
    <property type="evidence" value="ECO:0007669"/>
    <property type="project" value="UniProtKB-UniRule"/>
</dbReference>
<dbReference type="GO" id="GO:0030976">
    <property type="term" value="F:thiamine pyrophosphate binding"/>
    <property type="evidence" value="ECO:0007669"/>
    <property type="project" value="UniProtKB-UniRule"/>
</dbReference>
<dbReference type="GO" id="GO:0019310">
    <property type="term" value="P:inositol catabolic process"/>
    <property type="evidence" value="ECO:0007669"/>
    <property type="project" value="UniProtKB-UniRule"/>
</dbReference>
<dbReference type="GO" id="GO:0009097">
    <property type="term" value="P:isoleucine biosynthetic process"/>
    <property type="evidence" value="ECO:0007669"/>
    <property type="project" value="TreeGrafter"/>
</dbReference>
<dbReference type="GO" id="GO:0009099">
    <property type="term" value="P:L-valine biosynthetic process"/>
    <property type="evidence" value="ECO:0007669"/>
    <property type="project" value="TreeGrafter"/>
</dbReference>
<dbReference type="CDD" id="cd02003">
    <property type="entry name" value="TPP_IolD"/>
    <property type="match status" value="1"/>
</dbReference>
<dbReference type="CDD" id="cd07035">
    <property type="entry name" value="TPP_PYR_POX_like"/>
    <property type="match status" value="1"/>
</dbReference>
<dbReference type="Gene3D" id="3.40.50.970">
    <property type="match status" value="2"/>
</dbReference>
<dbReference type="Gene3D" id="3.40.50.1220">
    <property type="entry name" value="TPP-binding domain"/>
    <property type="match status" value="1"/>
</dbReference>
<dbReference type="HAMAP" id="MF_01669">
    <property type="entry name" value="IolD"/>
    <property type="match status" value="1"/>
</dbReference>
<dbReference type="InterPro" id="IPR029035">
    <property type="entry name" value="DHS-like_NAD/FAD-binding_dom"/>
</dbReference>
<dbReference type="InterPro" id="IPR030817">
    <property type="entry name" value="Myo_inos_IolD"/>
</dbReference>
<dbReference type="InterPro" id="IPR023757">
    <property type="entry name" value="THcHDO_hydrolase_firmi"/>
</dbReference>
<dbReference type="InterPro" id="IPR029061">
    <property type="entry name" value="THDP-binding"/>
</dbReference>
<dbReference type="InterPro" id="IPR012000">
    <property type="entry name" value="Thiamin_PyroP_enz_cen_dom"/>
</dbReference>
<dbReference type="InterPro" id="IPR012001">
    <property type="entry name" value="Thiamin_PyroP_enz_TPP-bd_dom"/>
</dbReference>
<dbReference type="InterPro" id="IPR000399">
    <property type="entry name" value="TPP-bd_CS"/>
</dbReference>
<dbReference type="InterPro" id="IPR045229">
    <property type="entry name" value="TPP_enz"/>
</dbReference>
<dbReference type="InterPro" id="IPR011766">
    <property type="entry name" value="TPP_enzyme_TPP-bd"/>
</dbReference>
<dbReference type="NCBIfam" id="TIGR04377">
    <property type="entry name" value="myo_inos_iolD"/>
    <property type="match status" value="1"/>
</dbReference>
<dbReference type="PANTHER" id="PTHR18968:SF9">
    <property type="entry name" value="3D-(3,5_4)-TRIHYDROXYCYCLOHEXANE-1,2-DIONE HYDROLASE"/>
    <property type="match status" value="1"/>
</dbReference>
<dbReference type="PANTHER" id="PTHR18968">
    <property type="entry name" value="THIAMINE PYROPHOSPHATE ENZYMES"/>
    <property type="match status" value="1"/>
</dbReference>
<dbReference type="Pfam" id="PF02775">
    <property type="entry name" value="TPP_enzyme_C"/>
    <property type="match status" value="1"/>
</dbReference>
<dbReference type="Pfam" id="PF00205">
    <property type="entry name" value="TPP_enzyme_M"/>
    <property type="match status" value="1"/>
</dbReference>
<dbReference type="Pfam" id="PF02776">
    <property type="entry name" value="TPP_enzyme_N"/>
    <property type="match status" value="1"/>
</dbReference>
<dbReference type="SUPFAM" id="SSF52467">
    <property type="entry name" value="DHS-like NAD/FAD-binding domain"/>
    <property type="match status" value="1"/>
</dbReference>
<dbReference type="SUPFAM" id="SSF52518">
    <property type="entry name" value="Thiamin diphosphate-binding fold (THDP-binding)"/>
    <property type="match status" value="2"/>
</dbReference>
<dbReference type="PROSITE" id="PS00187">
    <property type="entry name" value="TPP_ENZYMES"/>
    <property type="match status" value="1"/>
</dbReference>